<organism>
    <name type="scientific">Aspergillus flavus (strain ATCC 200026 / FGSC A1120 / IAM 13836 / NRRL 3357 / JCM 12722 / SRRC 167)</name>
    <dbReference type="NCBI Taxonomy" id="332952"/>
    <lineage>
        <taxon>Eukaryota</taxon>
        <taxon>Fungi</taxon>
        <taxon>Dikarya</taxon>
        <taxon>Ascomycota</taxon>
        <taxon>Pezizomycotina</taxon>
        <taxon>Eurotiomycetes</taxon>
        <taxon>Eurotiomycetidae</taxon>
        <taxon>Eurotiales</taxon>
        <taxon>Aspergillaceae</taxon>
        <taxon>Aspergillus</taxon>
        <taxon>Aspergillus subgen. Circumdati</taxon>
    </lineage>
</organism>
<proteinExistence type="inferred from homology"/>
<evidence type="ECO:0000250" key="1"/>
<evidence type="ECO:0000250" key="2">
    <source>
        <dbReference type="UniProtKB" id="O22317"/>
    </source>
</evidence>
<evidence type="ECO:0000255" key="3"/>
<evidence type="ECO:0000256" key="4">
    <source>
        <dbReference type="SAM" id="MobiDB-lite"/>
    </source>
</evidence>
<evidence type="ECO:0000305" key="5"/>
<accession>B8NTP7</accession>
<comment type="function">
    <text evidence="1">Glucanases play a role in cell expansion during growth, in cell-cell fusion during mating, and in spore release during sporulation. This enzyme may be involved in beta-glucan degradation. Active on laminarin and lichenan (By similarity).</text>
</comment>
<comment type="catalytic activity">
    <reaction>
        <text>Hydrolysis of (1-&gt;3)-beta-D-glucosidic linkages in (1-&gt;3)-beta-D-glucans.</text>
        <dbReference type="EC" id="3.2.1.39"/>
    </reaction>
</comment>
<comment type="subcellular location">
    <subcellularLocation>
        <location evidence="1">Cell membrane</location>
        <topology evidence="1">Single-pass type II membrane protein</topology>
    </subcellularLocation>
</comment>
<comment type="similarity">
    <text evidence="5">Belongs to the glycosyl hydrolase 17 family.</text>
</comment>
<sequence>MSGPHRSFSFNQGDDGAGDAGDVSPIRSQEGHFMNSPPRHNDVSPVSARSQAMGSSPSSGFLSAHEHGDRGWGQNSGHTQAMRTNSTTPGMDNLGPAAVGGGISGIALGVANSHNRQSGIDAFRDTDGRNLPAERGYNTTGSDNPYVPTPPGGGSHGSAENLRPRDSYGSNVALGAAAAPAGQLTPGGSNPSQRSLFDSPYQGVGAMDAGPYQRQSAYSAAGDYPLVINPDEIADDGDDGFTPVPNGKSASSNARAIPAAAAGGAAGGGLFGLFKSKKADNPSYGPVPGAGLEAGEKSRWVKPTPGGGSRKRGWIVGLALAFIVVGAIVGGAVGGTLGNRENEAPDTTKSASSDTESNGDLNKDSSEIKDLMNNPDLHKVFPGMDYTPWGVQYPLCLKYPPSQNNVTRDVAVLSQLTNTVRLYGTDCNQTEMVLHAIDRLELKDMKVWLGVWIDSNDTTNDRQIKQLYKVLDDTKDISIFKGAIVGNEALYRAGNDIASAKKKLISYMDDVRNHFKEKNYDLPIATSDLGDNWKEDLVTATDLVMSNVHPFFAGVTAKEAAGWTWNFWNQNDVPLTKGTNKKQVISEVGWPSGGGNDCGSNNKCTDDTSGSVAGIDEMNQFMSDWICQALENGTDYFWFEAFDEPWKVQYNTKDENWEDKWGLMDAARKLKPGLKIPDCGGKTAA</sequence>
<gene>
    <name type="primary">btgC</name>
    <name type="ORF">AFLA_099780</name>
</gene>
<name>BTGC_ASPFN</name>
<reference key="1">
    <citation type="journal article" date="2015" name="Genome Announc.">
        <title>Genome sequence of Aspergillus flavus NRRL 3357, a strain that causes aflatoxin contamination of food and feed.</title>
        <authorList>
            <person name="Nierman W.C."/>
            <person name="Yu J."/>
            <person name="Fedorova-Abrams N.D."/>
            <person name="Losada L."/>
            <person name="Cleveland T.E."/>
            <person name="Bhatnagar D."/>
            <person name="Bennett J.W."/>
            <person name="Dean R."/>
            <person name="Payne G.A."/>
        </authorList>
    </citation>
    <scope>NUCLEOTIDE SEQUENCE [LARGE SCALE GENOMIC DNA]</scope>
    <source>
        <strain>ATCC 200026 / FGSC A1120 / IAM 13836 / NRRL 3357 / JCM 12722 / SRRC 167</strain>
    </source>
</reference>
<protein>
    <recommendedName>
        <fullName>Probable glucan endo-1,3-beta-glucosidase btgC</fullName>
        <ecNumber>3.2.1.39</ecNumber>
    </recommendedName>
    <alternativeName>
        <fullName>Endo-1,3-beta-glucanase btgC</fullName>
    </alternativeName>
    <alternativeName>
        <fullName>Laminarinase btgC</fullName>
    </alternativeName>
</protein>
<dbReference type="EC" id="3.2.1.39"/>
<dbReference type="EMBL" id="EQ963484">
    <property type="protein sequence ID" value="EED46314.1"/>
    <property type="molecule type" value="Genomic_DNA"/>
</dbReference>
<dbReference type="RefSeq" id="XP_002383850.1">
    <property type="nucleotide sequence ID" value="XM_002383809.1"/>
</dbReference>
<dbReference type="SMR" id="B8NTP7"/>
<dbReference type="STRING" id="332952.B8NTP7"/>
<dbReference type="GlyCosmos" id="B8NTP7">
    <property type="glycosylation" value="4 sites, No reported glycans"/>
</dbReference>
<dbReference type="VEuPathDB" id="FungiDB:AFLA_010218"/>
<dbReference type="eggNOG" id="ENOG502QTKT">
    <property type="taxonomic scope" value="Eukaryota"/>
</dbReference>
<dbReference type="GO" id="GO:0009986">
    <property type="term" value="C:cell surface"/>
    <property type="evidence" value="ECO:0007669"/>
    <property type="project" value="TreeGrafter"/>
</dbReference>
<dbReference type="GO" id="GO:0005576">
    <property type="term" value="C:extracellular region"/>
    <property type="evidence" value="ECO:0007669"/>
    <property type="project" value="TreeGrafter"/>
</dbReference>
<dbReference type="GO" id="GO:0009277">
    <property type="term" value="C:fungal-type cell wall"/>
    <property type="evidence" value="ECO:0007669"/>
    <property type="project" value="TreeGrafter"/>
</dbReference>
<dbReference type="GO" id="GO:0005886">
    <property type="term" value="C:plasma membrane"/>
    <property type="evidence" value="ECO:0007669"/>
    <property type="project" value="UniProtKB-SubCell"/>
</dbReference>
<dbReference type="GO" id="GO:0042973">
    <property type="term" value="F:glucan endo-1,3-beta-D-glucosidase activity"/>
    <property type="evidence" value="ECO:0007669"/>
    <property type="project" value="UniProtKB-EC"/>
</dbReference>
<dbReference type="GO" id="GO:0071555">
    <property type="term" value="P:cell wall organization"/>
    <property type="evidence" value="ECO:0007669"/>
    <property type="project" value="UniProtKB-KW"/>
</dbReference>
<dbReference type="GO" id="GO:0000272">
    <property type="term" value="P:polysaccharide catabolic process"/>
    <property type="evidence" value="ECO:0007669"/>
    <property type="project" value="UniProtKB-KW"/>
</dbReference>
<dbReference type="FunFam" id="3.20.20.80:FF:000151">
    <property type="entry name" value="Glucan endo-1,3-beta-glucosidase btgC"/>
    <property type="match status" value="1"/>
</dbReference>
<dbReference type="Gene3D" id="3.20.20.80">
    <property type="entry name" value="Glycosidases"/>
    <property type="match status" value="1"/>
</dbReference>
<dbReference type="InterPro" id="IPR050732">
    <property type="entry name" value="Beta-glucan_modifiers"/>
</dbReference>
<dbReference type="InterPro" id="IPR017853">
    <property type="entry name" value="Glycoside_hydrolase_SF"/>
</dbReference>
<dbReference type="PANTHER" id="PTHR16631">
    <property type="entry name" value="GLUCAN 1,3-BETA-GLUCOSIDASE"/>
    <property type="match status" value="1"/>
</dbReference>
<dbReference type="PANTHER" id="PTHR16631:SF17">
    <property type="entry name" value="GLUCAN ENDO-1,3-BETA-GLUCOSIDASE BTGC"/>
    <property type="match status" value="1"/>
</dbReference>
<dbReference type="SUPFAM" id="SSF51445">
    <property type="entry name" value="(Trans)glycosidases"/>
    <property type="match status" value="1"/>
</dbReference>
<feature type="chain" id="PRO_0000395123" description="Probable glucan endo-1,3-beta-glucosidase btgC">
    <location>
        <begin position="1"/>
        <end position="685"/>
    </location>
</feature>
<feature type="topological domain" description="Cytoplasmic" evidence="3">
    <location>
        <begin position="1"/>
        <end position="312"/>
    </location>
</feature>
<feature type="transmembrane region" description="Helical; Signal-anchor for type II membrane protein" evidence="3">
    <location>
        <begin position="313"/>
        <end position="333"/>
    </location>
</feature>
<feature type="topological domain" description="Extracellular" evidence="3">
    <location>
        <begin position="334"/>
        <end position="685"/>
    </location>
</feature>
<feature type="region of interest" description="Disordered" evidence="4">
    <location>
        <begin position="1"/>
        <end position="96"/>
    </location>
</feature>
<feature type="region of interest" description="Disordered" evidence="4">
    <location>
        <begin position="119"/>
        <end position="168"/>
    </location>
</feature>
<feature type="region of interest" description="Disordered" evidence="4">
    <location>
        <begin position="180"/>
        <end position="202"/>
    </location>
</feature>
<feature type="region of interest" description="Disordered" evidence="4">
    <location>
        <begin position="335"/>
        <end position="369"/>
    </location>
</feature>
<feature type="compositionally biased region" description="Polar residues" evidence="4">
    <location>
        <begin position="47"/>
        <end position="61"/>
    </location>
</feature>
<feature type="compositionally biased region" description="Polar residues" evidence="4">
    <location>
        <begin position="73"/>
        <end position="90"/>
    </location>
</feature>
<feature type="compositionally biased region" description="Polar residues" evidence="4">
    <location>
        <begin position="345"/>
        <end position="360"/>
    </location>
</feature>
<feature type="active site" description="Proton donor" evidence="2">
    <location>
        <position position="488"/>
    </location>
</feature>
<feature type="active site" description="Nucleophile" evidence="2">
    <location>
        <position position="587"/>
    </location>
</feature>
<feature type="glycosylation site" description="N-linked (GlcNAc...) asparagine" evidence="3">
    <location>
        <position position="405"/>
    </location>
</feature>
<feature type="glycosylation site" description="N-linked (GlcNAc...) asparagine" evidence="3">
    <location>
        <position position="428"/>
    </location>
</feature>
<feature type="glycosylation site" description="N-linked (GlcNAc...) asparagine" evidence="3">
    <location>
        <position position="456"/>
    </location>
</feature>
<feature type="glycosylation site" description="N-linked (GlcNAc...) asparagine" evidence="3">
    <location>
        <position position="632"/>
    </location>
</feature>
<keyword id="KW-0119">Carbohydrate metabolism</keyword>
<keyword id="KW-1003">Cell membrane</keyword>
<keyword id="KW-0961">Cell wall biogenesis/degradation</keyword>
<keyword id="KW-0325">Glycoprotein</keyword>
<keyword id="KW-0378">Hydrolase</keyword>
<keyword id="KW-0472">Membrane</keyword>
<keyword id="KW-0624">Polysaccharide degradation</keyword>
<keyword id="KW-0735">Signal-anchor</keyword>
<keyword id="KW-0812">Transmembrane</keyword>
<keyword id="KW-1133">Transmembrane helix</keyword>